<sequence>MAGPPDSDLDDVARIRLVLARELETINEYEAYARASSNPEVRAFFQHLAAEEKEHVSEAVHMLRMLDSGQNDHFAKPFVPGHFQAAEAPAPATVHVPTPDGPAFSVNGRNGRLPSEPPTSLPPQRLLYGLPAPPPAVESHPLTVGSLRRGGGGSGSGR</sequence>
<reference key="1">
    <citation type="journal article" date="2006" name="Proc. Natl. Acad. Sci. U.S.A.">
        <title>Evolution of sensory complexity recorded in a myxobacterial genome.</title>
        <authorList>
            <person name="Goldman B.S."/>
            <person name="Nierman W.C."/>
            <person name="Kaiser D."/>
            <person name="Slater S.C."/>
            <person name="Durkin A.S."/>
            <person name="Eisen J.A."/>
            <person name="Ronning C.M."/>
            <person name="Barbazuk W.B."/>
            <person name="Blanchard M."/>
            <person name="Field C."/>
            <person name="Halling C."/>
            <person name="Hinkle G."/>
            <person name="Iartchuk O."/>
            <person name="Kim H.S."/>
            <person name="Mackenzie C."/>
            <person name="Madupu R."/>
            <person name="Miller N."/>
            <person name="Shvartsbeyn A."/>
            <person name="Sullivan S.A."/>
            <person name="Vaudin M."/>
            <person name="Wiegand R."/>
            <person name="Kaplan H.B."/>
        </authorList>
    </citation>
    <scope>NUCLEOTIDE SEQUENCE [LARGE SCALE GENOMIC DNA]</scope>
    <source>
        <strain>DK1622</strain>
    </source>
</reference>
<reference key="2">
    <citation type="journal article" date="2009" name="J. Microbiol. Biotechnol.">
        <title>Operon required for fruiting body development in Myxococcus xanthus.</title>
        <authorList>
            <person name="Kim D."/>
            <person name="Chung J."/>
            <person name="Hyun H."/>
            <person name="Lee C."/>
            <person name="Lee K."/>
            <person name="Cho K."/>
        </authorList>
    </citation>
    <scope>DISRUPTION PHENOTYPE</scope>
    <source>
        <strain>DZ2</strain>
    </source>
</reference>
<reference key="3">
    <citation type="journal article" date="2014" name="EMBO J.">
        <title>A virus capsid-like nanocompartment that stores iron and protects bacteria from oxidative stress.</title>
        <authorList>
            <person name="McHugh C.A."/>
            <person name="Fontana J."/>
            <person name="Nemecek D."/>
            <person name="Cheng N."/>
            <person name="Aksyuk A.A."/>
            <person name="Heymann J.B."/>
            <person name="Winkler D.C."/>
            <person name="Lam A.S."/>
            <person name="Wall J.S."/>
            <person name="Steven A.C."/>
            <person name="Hoiczyk E."/>
        </authorList>
    </citation>
    <scope>IDENTIFICATION BY MASS SPECTROMETRY</scope>
    <scope>SEQUENCE REVISION TO N-TERMINUS</scope>
    <scope>FUNCTION</scope>
    <scope>SUBCELLULAR LOCATION</scope>
    <scope>DOMAIN</scope>
    <source>
        <strain>DK1622</strain>
    </source>
</reference>
<reference key="4">
    <citation type="journal article" date="2019" name="ACS Nano">
        <title>Iron-Sequestering Nanocompartments as Multiplexed Electron Microscopy Gene Reporters.</title>
        <authorList>
            <person name="Sigmund F."/>
            <person name="Pettinger S."/>
            <person name="Kube M."/>
            <person name="Schneider F."/>
            <person name="Schifferer M."/>
            <person name="Schneider S."/>
            <person name="Efremova M.V."/>
            <person name="Pujol-Marti J."/>
            <person name="Aichler M."/>
            <person name="Walch A."/>
            <person name="Misgeld T."/>
            <person name="Dietz H."/>
            <person name="Westmeyer G.G."/>
        </authorList>
    </citation>
    <scope>FUNCTION</scope>
    <scope>SUBCELLULAR LOCATION</scope>
    <scope>BIOTECHNOLOGY</scope>
    <source>
        <strain>DK1622</strain>
    </source>
</reference>
<gene>
    <name evidence="6" type="primary">encB</name>
    <name type="ordered locus">MXAN_3557</name>
</gene>
<protein>
    <recommendedName>
        <fullName evidence="6">Encapsulin nanocompartment cargo protein EncB</fullName>
    </recommendedName>
</protein>
<evidence type="ECO:0000250" key="1">
    <source>
        <dbReference type="UniProtKB" id="Q2RVS1"/>
    </source>
</evidence>
<evidence type="ECO:0000256" key="2">
    <source>
        <dbReference type="SAM" id="MobiDB-lite"/>
    </source>
</evidence>
<evidence type="ECO:0000269" key="3">
    <source>
    </source>
</evidence>
<evidence type="ECO:0000269" key="4">
    <source>
    </source>
</evidence>
<evidence type="ECO:0000269" key="5">
    <source>
    </source>
</evidence>
<evidence type="ECO:0000303" key="6">
    <source>
    </source>
</evidence>
<evidence type="ECO:0000305" key="7"/>
<evidence type="ECO:0000305" key="8">
    <source>
    </source>
</evidence>
<evidence type="ECO:0007829" key="9">
    <source>
        <dbReference type="PDB" id="7S5C"/>
    </source>
</evidence>
<feature type="chain" id="PRO_0000455321" description="Encapsulin nanocompartment cargo protein EncB">
    <location>
        <begin position="1"/>
        <end position="158"/>
    </location>
</feature>
<feature type="region of interest" description="Disordered" evidence="2">
    <location>
        <begin position="92"/>
        <end position="158"/>
    </location>
</feature>
<feature type="region of interest" description="Probable targeting peptide" evidence="8">
    <location>
        <begin position="142"/>
        <end position="149"/>
    </location>
</feature>
<feature type="short sequence motif" description="Di-iron-binding motif" evidence="8">
    <location>
        <begin position="52"/>
        <end position="55"/>
    </location>
</feature>
<feature type="short sequence motif" description="Di-iron-binding motif" evidence="8">
    <location>
        <begin position="58"/>
        <end position="61"/>
    </location>
</feature>
<feature type="compositionally biased region" description="Gly residues" evidence="2">
    <location>
        <begin position="148"/>
        <end position="158"/>
    </location>
</feature>
<feature type="binding site" evidence="1">
    <location>
        <position position="22"/>
    </location>
    <ligand>
        <name>Fe cation</name>
        <dbReference type="ChEBI" id="CHEBI:24875"/>
        <label>1</label>
    </ligand>
</feature>
<feature type="binding site" evidence="1">
    <location>
        <position position="22"/>
    </location>
    <ligand>
        <name>Fe cation</name>
        <dbReference type="ChEBI" id="CHEBI:24875"/>
        <label>2</label>
    </ligand>
</feature>
<feature type="binding site" evidence="1">
    <location>
        <position position="52"/>
    </location>
    <ligand>
        <name>Fe cation</name>
        <dbReference type="ChEBI" id="CHEBI:24875"/>
        <label>1</label>
    </ligand>
</feature>
<feature type="binding site" evidence="1">
    <location>
        <position position="52"/>
    </location>
    <ligand>
        <name>Fe cation</name>
        <dbReference type="ChEBI" id="CHEBI:24875"/>
        <label>2</label>
    </ligand>
</feature>
<feature type="binding site" evidence="1">
    <location>
        <position position="55"/>
    </location>
    <ligand>
        <name>Fe cation</name>
        <dbReference type="ChEBI" id="CHEBI:24875"/>
        <label>1</label>
    </ligand>
</feature>
<feature type="binding site" evidence="1">
    <location>
        <position position="55"/>
    </location>
    <ligand>
        <name>Fe cation</name>
        <dbReference type="ChEBI" id="CHEBI:24875"/>
        <label>2</label>
    </ligand>
</feature>
<feature type="helix" evidence="9">
    <location>
        <begin position="11"/>
        <end position="35"/>
    </location>
</feature>
<feature type="helix" evidence="9">
    <location>
        <begin position="39"/>
        <end position="66"/>
    </location>
</feature>
<feature type="helix" evidence="9">
    <location>
        <begin position="68"/>
        <end position="71"/>
    </location>
</feature>
<keyword id="KW-0002">3D-structure</keyword>
<keyword id="KW-1284">Encapsulin nanocompartment</keyword>
<keyword id="KW-0408">Iron</keyword>
<keyword id="KW-0409">Iron storage</keyword>
<keyword id="KW-0479">Metal-binding</keyword>
<keyword id="KW-1185">Reference proteome</keyword>
<proteinExistence type="evidence at protein level"/>
<accession>Q1D6H3</accession>
<name>ENCB_MYXXD</name>
<dbReference type="EMBL" id="CP000113">
    <property type="protein sequence ID" value="ABF88760.1"/>
    <property type="status" value="ALT_INIT"/>
    <property type="molecule type" value="Genomic_DNA"/>
</dbReference>
<dbReference type="RefSeq" id="WP_026114000.1">
    <property type="nucleotide sequence ID" value="NC_008095.1"/>
</dbReference>
<dbReference type="PDB" id="7S2T">
    <property type="method" value="EM"/>
    <property type="resolution" value="3.45 A"/>
    <property type="chains" value="F/G/H=138-149"/>
</dbReference>
<dbReference type="PDB" id="7S5C">
    <property type="method" value="X-ray"/>
    <property type="resolution" value="1.86 A"/>
    <property type="chains" value="A/B/C/D/E/F/G/H/I/J=1-100"/>
</dbReference>
<dbReference type="PDB" id="7S5K">
    <property type="method" value="X-ray"/>
    <property type="resolution" value="1.95 A"/>
    <property type="chains" value="A/B/C/D/E/F/G/H/I/J=14-81"/>
</dbReference>
<dbReference type="PDBsum" id="7S2T"/>
<dbReference type="PDBsum" id="7S5C"/>
<dbReference type="PDBsum" id="7S5K"/>
<dbReference type="SMR" id="Q1D6H3"/>
<dbReference type="IntAct" id="Q1D6H3">
    <property type="interactions" value="1"/>
</dbReference>
<dbReference type="MINT" id="Q1D6H3"/>
<dbReference type="STRING" id="246197.MXAN_3557"/>
<dbReference type="TCDB" id="1.S.7.1.2">
    <property type="family name" value="the bacterial/archaeal nanocompartment encapsulin shell protein2 (banc-sp2) family"/>
</dbReference>
<dbReference type="EnsemblBacteria" id="ABF88760">
    <property type="protein sequence ID" value="ABF88760"/>
    <property type="gene ID" value="MXAN_3557"/>
</dbReference>
<dbReference type="GeneID" id="41360902"/>
<dbReference type="KEGG" id="mxa:MXAN_3557"/>
<dbReference type="eggNOG" id="COG1633">
    <property type="taxonomic scope" value="Bacteria"/>
</dbReference>
<dbReference type="HOGENOM" id="CLU_1676786_0_0_7"/>
<dbReference type="OrthoDB" id="5382552at2"/>
<dbReference type="Proteomes" id="UP000002402">
    <property type="component" value="Chromosome"/>
</dbReference>
<dbReference type="GO" id="GO:0140737">
    <property type="term" value="C:encapsulin nanocompartment"/>
    <property type="evidence" value="ECO:0000314"/>
    <property type="project" value="UniProtKB"/>
</dbReference>
<dbReference type="GO" id="GO:0046872">
    <property type="term" value="F:metal ion binding"/>
    <property type="evidence" value="ECO:0007669"/>
    <property type="project" value="UniProtKB-KW"/>
</dbReference>
<dbReference type="GO" id="GO:0006879">
    <property type="term" value="P:intracellular iron ion homeostasis"/>
    <property type="evidence" value="ECO:0007669"/>
    <property type="project" value="UniProtKB-KW"/>
</dbReference>
<dbReference type="Gene3D" id="6.10.140.1960">
    <property type="match status" value="1"/>
</dbReference>
<dbReference type="InterPro" id="IPR054581">
    <property type="entry name" value="EncFtn-like"/>
</dbReference>
<dbReference type="InterPro" id="IPR009078">
    <property type="entry name" value="Ferritin-like_SF"/>
</dbReference>
<dbReference type="Pfam" id="PF22277">
    <property type="entry name" value="EncFtn-like"/>
    <property type="match status" value="1"/>
</dbReference>
<dbReference type="SUPFAM" id="SSF47240">
    <property type="entry name" value="Ferritin-like"/>
    <property type="match status" value="1"/>
</dbReference>
<organism>
    <name type="scientific">Myxococcus xanthus (strain DK1622)</name>
    <dbReference type="NCBI Taxonomy" id="246197"/>
    <lineage>
        <taxon>Bacteria</taxon>
        <taxon>Pseudomonadati</taxon>
        <taxon>Myxococcota</taxon>
        <taxon>Myxococcia</taxon>
        <taxon>Myxococcales</taxon>
        <taxon>Cystobacterineae</taxon>
        <taxon>Myxococcaceae</taxon>
        <taxon>Myxococcus</taxon>
    </lineage>
</organism>
<comment type="function">
    <text evidence="4 8">Cargo protein of a type 1 encapsulin nanocompartment. May help nucleate Fe atoms in the interior of the encapsulin nanocompartment (Probable). Present in about 36 copies/encapsulin nanocompartment (PubMed:25024436).</text>
</comment>
<comment type="subcellular location">
    <subcellularLocation>
        <location evidence="4">Encapsulin nanocompartment</location>
    </subcellularLocation>
    <text evidence="8">Probably lies against the interior face of the nanocompartment.</text>
</comment>
<comment type="disruption phenotype">
    <text evidence="3">Forms wild-type fruiting bodies.</text>
</comment>
<comment type="biotechnology">
    <text evidence="5">The encapsulin and a cargo construct (an encB-encC-encD fusion) can be overexpressed in E.coli and in human HEK293T cells. In HEK293T in the presence of 0.5 M ferrous ammonium sulfate nanocompartments can be detected and used as cell markers. Coexpression of this nanocompartment with a larger nanocompartment from Q.thermotolerans (AC A0A0F5HPP7) allows of expression of different sized iron-rich particles. The encapsulin shell proteins are not seen to mix.</text>
</comment>
<comment type="similarity">
    <text evidence="7">Belongs to the ferritin-like superfamily.</text>
</comment>
<comment type="sequence caution" evidence="4">
    <conflict type="erroneous initiation">
        <sequence resource="EMBL-CDS" id="ABF88760"/>
    </conflict>
    <text>Extended N-terminus.</text>
</comment>